<dbReference type="EC" id="6.1.1.11" evidence="1"/>
<dbReference type="EMBL" id="CP000016">
    <property type="protein sequence ID" value="AAZ41019.1"/>
    <property type="molecule type" value="Genomic_DNA"/>
</dbReference>
<dbReference type="RefSeq" id="WP_011282928.1">
    <property type="nucleotide sequence ID" value="NC_007292.1"/>
</dbReference>
<dbReference type="SMR" id="Q492S4"/>
<dbReference type="STRING" id="291272.BPEN_395"/>
<dbReference type="KEGG" id="bpn:BPEN_395"/>
<dbReference type="eggNOG" id="COG0172">
    <property type="taxonomic scope" value="Bacteria"/>
</dbReference>
<dbReference type="HOGENOM" id="CLU_023797_1_1_6"/>
<dbReference type="OrthoDB" id="9804647at2"/>
<dbReference type="UniPathway" id="UPA00906">
    <property type="reaction ID" value="UER00895"/>
</dbReference>
<dbReference type="Proteomes" id="UP000007794">
    <property type="component" value="Chromosome"/>
</dbReference>
<dbReference type="GO" id="GO:0005737">
    <property type="term" value="C:cytoplasm"/>
    <property type="evidence" value="ECO:0007669"/>
    <property type="project" value="UniProtKB-SubCell"/>
</dbReference>
<dbReference type="GO" id="GO:0005524">
    <property type="term" value="F:ATP binding"/>
    <property type="evidence" value="ECO:0007669"/>
    <property type="project" value="UniProtKB-UniRule"/>
</dbReference>
<dbReference type="GO" id="GO:0004828">
    <property type="term" value="F:serine-tRNA ligase activity"/>
    <property type="evidence" value="ECO:0007669"/>
    <property type="project" value="UniProtKB-UniRule"/>
</dbReference>
<dbReference type="GO" id="GO:0016260">
    <property type="term" value="P:selenocysteine biosynthetic process"/>
    <property type="evidence" value="ECO:0007669"/>
    <property type="project" value="UniProtKB-UniRule"/>
</dbReference>
<dbReference type="GO" id="GO:0006434">
    <property type="term" value="P:seryl-tRNA aminoacylation"/>
    <property type="evidence" value="ECO:0007669"/>
    <property type="project" value="UniProtKB-UniRule"/>
</dbReference>
<dbReference type="CDD" id="cd00770">
    <property type="entry name" value="SerRS_core"/>
    <property type="match status" value="1"/>
</dbReference>
<dbReference type="Gene3D" id="3.30.930.10">
    <property type="entry name" value="Bira Bifunctional Protein, Domain 2"/>
    <property type="match status" value="1"/>
</dbReference>
<dbReference type="Gene3D" id="1.10.287.40">
    <property type="entry name" value="Serine-tRNA synthetase, tRNA binding domain"/>
    <property type="match status" value="1"/>
</dbReference>
<dbReference type="HAMAP" id="MF_00176">
    <property type="entry name" value="Ser_tRNA_synth_type1"/>
    <property type="match status" value="1"/>
</dbReference>
<dbReference type="InterPro" id="IPR002314">
    <property type="entry name" value="aa-tRNA-synt_IIb"/>
</dbReference>
<dbReference type="InterPro" id="IPR006195">
    <property type="entry name" value="aa-tRNA-synth_II"/>
</dbReference>
<dbReference type="InterPro" id="IPR045864">
    <property type="entry name" value="aa-tRNA-synth_II/BPL/LPL"/>
</dbReference>
<dbReference type="InterPro" id="IPR002317">
    <property type="entry name" value="Ser-tRNA-ligase_type_1"/>
</dbReference>
<dbReference type="InterPro" id="IPR015866">
    <property type="entry name" value="Ser-tRNA-synth_1_N"/>
</dbReference>
<dbReference type="InterPro" id="IPR042103">
    <property type="entry name" value="SerRS_1_N_sf"/>
</dbReference>
<dbReference type="InterPro" id="IPR033729">
    <property type="entry name" value="SerRS_core"/>
</dbReference>
<dbReference type="InterPro" id="IPR010978">
    <property type="entry name" value="tRNA-bd_arm"/>
</dbReference>
<dbReference type="NCBIfam" id="TIGR00414">
    <property type="entry name" value="serS"/>
    <property type="match status" value="1"/>
</dbReference>
<dbReference type="PANTHER" id="PTHR43697:SF1">
    <property type="entry name" value="SERINE--TRNA LIGASE"/>
    <property type="match status" value="1"/>
</dbReference>
<dbReference type="PANTHER" id="PTHR43697">
    <property type="entry name" value="SERYL-TRNA SYNTHETASE"/>
    <property type="match status" value="1"/>
</dbReference>
<dbReference type="Pfam" id="PF02403">
    <property type="entry name" value="Seryl_tRNA_N"/>
    <property type="match status" value="1"/>
</dbReference>
<dbReference type="Pfam" id="PF00587">
    <property type="entry name" value="tRNA-synt_2b"/>
    <property type="match status" value="1"/>
</dbReference>
<dbReference type="PIRSF" id="PIRSF001529">
    <property type="entry name" value="Ser-tRNA-synth_IIa"/>
    <property type="match status" value="1"/>
</dbReference>
<dbReference type="PRINTS" id="PR00981">
    <property type="entry name" value="TRNASYNTHSER"/>
</dbReference>
<dbReference type="SUPFAM" id="SSF55681">
    <property type="entry name" value="Class II aaRS and biotin synthetases"/>
    <property type="match status" value="1"/>
</dbReference>
<dbReference type="SUPFAM" id="SSF46589">
    <property type="entry name" value="tRNA-binding arm"/>
    <property type="match status" value="1"/>
</dbReference>
<dbReference type="PROSITE" id="PS50862">
    <property type="entry name" value="AA_TRNA_LIGASE_II"/>
    <property type="match status" value="1"/>
</dbReference>
<gene>
    <name evidence="1" type="primary">serS</name>
    <name type="ordered locus">BPEN_395</name>
</gene>
<keyword id="KW-0030">Aminoacyl-tRNA synthetase</keyword>
<keyword id="KW-0067">ATP-binding</keyword>
<keyword id="KW-0963">Cytoplasm</keyword>
<keyword id="KW-0436">Ligase</keyword>
<keyword id="KW-0547">Nucleotide-binding</keyword>
<keyword id="KW-0648">Protein biosynthesis</keyword>
<keyword id="KW-1185">Reference proteome</keyword>
<protein>
    <recommendedName>
        <fullName evidence="1">Serine--tRNA ligase</fullName>
        <ecNumber evidence="1">6.1.1.11</ecNumber>
    </recommendedName>
    <alternativeName>
        <fullName evidence="1">Seryl-tRNA synthetase</fullName>
        <shortName evidence="1">SerRS</shortName>
    </alternativeName>
    <alternativeName>
        <fullName evidence="1">Seryl-tRNA(Ser/Sec) synthetase</fullName>
    </alternativeName>
</protein>
<reference key="1">
    <citation type="journal article" date="2005" name="Genome Res.">
        <title>Genome sequence of Blochmannia pennsylvanicus indicates parallel evolutionary trends among bacterial mutualists of insects.</title>
        <authorList>
            <person name="Degnan P.H."/>
            <person name="Lazarus A.B."/>
            <person name="Wernegreen J.J."/>
        </authorList>
    </citation>
    <scope>NUCLEOTIDE SEQUENCE [LARGE SCALE GENOMIC DNA]</scope>
    <source>
        <strain>BPEN</strain>
    </source>
</reference>
<accession>Q492S4</accession>
<name>SYS_BLOPB</name>
<feature type="chain" id="PRO_1000019620" description="Serine--tRNA ligase">
    <location>
        <begin position="1"/>
        <end position="428"/>
    </location>
</feature>
<feature type="binding site" evidence="1">
    <location>
        <begin position="235"/>
        <end position="237"/>
    </location>
    <ligand>
        <name>L-serine</name>
        <dbReference type="ChEBI" id="CHEBI:33384"/>
    </ligand>
</feature>
<feature type="binding site" evidence="1">
    <location>
        <begin position="266"/>
        <end position="268"/>
    </location>
    <ligand>
        <name>ATP</name>
        <dbReference type="ChEBI" id="CHEBI:30616"/>
    </ligand>
</feature>
<feature type="binding site" evidence="1">
    <location>
        <position position="289"/>
    </location>
    <ligand>
        <name>L-serine</name>
        <dbReference type="ChEBI" id="CHEBI:33384"/>
    </ligand>
</feature>
<feature type="binding site" evidence="1">
    <location>
        <begin position="353"/>
        <end position="356"/>
    </location>
    <ligand>
        <name>ATP</name>
        <dbReference type="ChEBI" id="CHEBI:30616"/>
    </ligand>
</feature>
<feature type="binding site" evidence="1">
    <location>
        <position position="389"/>
    </location>
    <ligand>
        <name>L-serine</name>
        <dbReference type="ChEBI" id="CHEBI:33384"/>
    </ligand>
</feature>
<organism>
    <name type="scientific">Blochmanniella pennsylvanica (strain BPEN)</name>
    <dbReference type="NCBI Taxonomy" id="291272"/>
    <lineage>
        <taxon>Bacteria</taxon>
        <taxon>Pseudomonadati</taxon>
        <taxon>Pseudomonadota</taxon>
        <taxon>Gammaproteobacteria</taxon>
        <taxon>Enterobacterales</taxon>
        <taxon>Enterobacteriaceae</taxon>
        <taxon>ant endosymbionts</taxon>
        <taxon>Candidatus Blochmanniella</taxon>
    </lineage>
</organism>
<proteinExistence type="inferred from homology"/>
<comment type="function">
    <text evidence="1">Catalyzes the attachment of serine to tRNA(Ser). Is also able to aminoacylate tRNA(Sec) with serine, to form the misacylated tRNA L-seryl-tRNA(Sec), which will be further converted into selenocysteinyl-tRNA(Sec).</text>
</comment>
<comment type="catalytic activity">
    <reaction evidence="1">
        <text>tRNA(Ser) + L-serine + ATP = L-seryl-tRNA(Ser) + AMP + diphosphate + H(+)</text>
        <dbReference type="Rhea" id="RHEA:12292"/>
        <dbReference type="Rhea" id="RHEA-COMP:9669"/>
        <dbReference type="Rhea" id="RHEA-COMP:9703"/>
        <dbReference type="ChEBI" id="CHEBI:15378"/>
        <dbReference type="ChEBI" id="CHEBI:30616"/>
        <dbReference type="ChEBI" id="CHEBI:33019"/>
        <dbReference type="ChEBI" id="CHEBI:33384"/>
        <dbReference type="ChEBI" id="CHEBI:78442"/>
        <dbReference type="ChEBI" id="CHEBI:78533"/>
        <dbReference type="ChEBI" id="CHEBI:456215"/>
        <dbReference type="EC" id="6.1.1.11"/>
    </reaction>
</comment>
<comment type="catalytic activity">
    <reaction evidence="1">
        <text>tRNA(Sec) + L-serine + ATP = L-seryl-tRNA(Sec) + AMP + diphosphate + H(+)</text>
        <dbReference type="Rhea" id="RHEA:42580"/>
        <dbReference type="Rhea" id="RHEA-COMP:9742"/>
        <dbReference type="Rhea" id="RHEA-COMP:10128"/>
        <dbReference type="ChEBI" id="CHEBI:15378"/>
        <dbReference type="ChEBI" id="CHEBI:30616"/>
        <dbReference type="ChEBI" id="CHEBI:33019"/>
        <dbReference type="ChEBI" id="CHEBI:33384"/>
        <dbReference type="ChEBI" id="CHEBI:78442"/>
        <dbReference type="ChEBI" id="CHEBI:78533"/>
        <dbReference type="ChEBI" id="CHEBI:456215"/>
        <dbReference type="EC" id="6.1.1.11"/>
    </reaction>
</comment>
<comment type="pathway">
    <text evidence="1">Aminoacyl-tRNA biosynthesis; selenocysteinyl-tRNA(Sec) biosynthesis; L-seryl-tRNA(Sec) from L-serine and tRNA(Sec): step 1/1.</text>
</comment>
<comment type="subunit">
    <text evidence="1">Homodimer. The tRNA molecule binds across the dimer.</text>
</comment>
<comment type="subcellular location">
    <subcellularLocation>
        <location evidence="1">Cytoplasm</location>
    </subcellularLocation>
</comment>
<comment type="domain">
    <text evidence="1">Consists of two distinct domains, a catalytic core and a N-terminal extension that is involved in tRNA binding.</text>
</comment>
<comment type="similarity">
    <text evidence="1">Belongs to the class-II aminoacyl-tRNA synthetase family. Type-1 seryl-tRNA synthetase subfamily.</text>
</comment>
<evidence type="ECO:0000255" key="1">
    <source>
        <dbReference type="HAMAP-Rule" id="MF_00176"/>
    </source>
</evidence>
<sequence length="428" mass="49049">MIDPNLLRSNLDLVAKKLARRKFILNINKFRQQESLRKILQKKTESLQTERKAKAKIIGVAKSRGENVEFLCQEAYVLGKKLTSLKLENKELKNRIKQFELSLPNIPDDQVPYGFRDQDNLEIMRWGKPGQYNFPIRDHVALGALTNGLDFSNATKLTGSRFIVMKGQIAHLHRALSQFMIDLHVKRHGYEEYYLPYLVNQDSLYGAGQLPKFYEDLFHIQHLQSGTNPYALIPTAEVPLINLVRDVILDEEELPIKMVAHTPCFRYEAGSYGHHTRGLIRMHQFDKVEMVQVVHPDKSMQILEEITSHAEQVLQLLKLPYRKILLCTGNIGFSSCKTYDLEVWLPAYNAYCEVSSCSNVGDFQARRIRARYKGRMNRKARLLHTLNASGVAIGRALAAVLENYQLEDGRVAIPSVLSPYMSDITHIN</sequence>